<comment type="function">
    <text evidence="1">Molecular chaperone. Has ATPase activity.</text>
</comment>
<comment type="subunit">
    <text evidence="1">Homodimer.</text>
</comment>
<comment type="subcellular location">
    <subcellularLocation>
        <location evidence="1">Cytoplasm</location>
    </subcellularLocation>
</comment>
<comment type="similarity">
    <text evidence="1">Belongs to the heat shock protein 90 family.</text>
</comment>
<accession>A6WPI2</accession>
<proteinExistence type="inferred from homology"/>
<reference key="1">
    <citation type="submission" date="2007-07" db="EMBL/GenBank/DDBJ databases">
        <title>Complete sequence of chromosome of Shewanella baltica OS185.</title>
        <authorList>
            <consortium name="US DOE Joint Genome Institute"/>
            <person name="Copeland A."/>
            <person name="Lucas S."/>
            <person name="Lapidus A."/>
            <person name="Barry K."/>
            <person name="Glavina del Rio T."/>
            <person name="Dalin E."/>
            <person name="Tice H."/>
            <person name="Pitluck S."/>
            <person name="Sims D."/>
            <person name="Brettin T."/>
            <person name="Bruce D."/>
            <person name="Detter J.C."/>
            <person name="Han C."/>
            <person name="Schmutz J."/>
            <person name="Larimer F."/>
            <person name="Land M."/>
            <person name="Hauser L."/>
            <person name="Kyrpides N."/>
            <person name="Mikhailova N."/>
            <person name="Brettar I."/>
            <person name="Rodrigues J."/>
            <person name="Konstantinidis K."/>
            <person name="Tiedje J."/>
            <person name="Richardson P."/>
        </authorList>
    </citation>
    <scope>NUCLEOTIDE SEQUENCE [LARGE SCALE GENOMIC DNA]</scope>
    <source>
        <strain>OS185</strain>
    </source>
</reference>
<evidence type="ECO:0000255" key="1">
    <source>
        <dbReference type="HAMAP-Rule" id="MF_00505"/>
    </source>
</evidence>
<feature type="chain" id="PRO_1000014952" description="Chaperone protein HtpG">
    <location>
        <begin position="1"/>
        <end position="637"/>
    </location>
</feature>
<feature type="region of interest" description="A; substrate-binding" evidence="1">
    <location>
        <begin position="1"/>
        <end position="345"/>
    </location>
</feature>
<feature type="region of interest" description="B" evidence="1">
    <location>
        <begin position="346"/>
        <end position="562"/>
    </location>
</feature>
<feature type="region of interest" description="C" evidence="1">
    <location>
        <begin position="563"/>
        <end position="637"/>
    </location>
</feature>
<organism>
    <name type="scientific">Shewanella baltica (strain OS185)</name>
    <dbReference type="NCBI Taxonomy" id="402882"/>
    <lineage>
        <taxon>Bacteria</taxon>
        <taxon>Pseudomonadati</taxon>
        <taxon>Pseudomonadota</taxon>
        <taxon>Gammaproteobacteria</taxon>
        <taxon>Alteromonadales</taxon>
        <taxon>Shewanellaceae</taxon>
        <taxon>Shewanella</taxon>
    </lineage>
</organism>
<dbReference type="EMBL" id="CP000753">
    <property type="protein sequence ID" value="ABS08721.1"/>
    <property type="molecule type" value="Genomic_DNA"/>
</dbReference>
<dbReference type="RefSeq" id="WP_006086212.1">
    <property type="nucleotide sequence ID" value="NC_009665.1"/>
</dbReference>
<dbReference type="SMR" id="A6WPI2"/>
<dbReference type="GeneID" id="11772753"/>
<dbReference type="KEGG" id="sbm:Shew185_2586"/>
<dbReference type="HOGENOM" id="CLU_006684_3_0_6"/>
<dbReference type="GO" id="GO:0005737">
    <property type="term" value="C:cytoplasm"/>
    <property type="evidence" value="ECO:0007669"/>
    <property type="project" value="UniProtKB-SubCell"/>
</dbReference>
<dbReference type="GO" id="GO:0005524">
    <property type="term" value="F:ATP binding"/>
    <property type="evidence" value="ECO:0007669"/>
    <property type="project" value="UniProtKB-UniRule"/>
</dbReference>
<dbReference type="GO" id="GO:0016887">
    <property type="term" value="F:ATP hydrolysis activity"/>
    <property type="evidence" value="ECO:0007669"/>
    <property type="project" value="InterPro"/>
</dbReference>
<dbReference type="GO" id="GO:0140662">
    <property type="term" value="F:ATP-dependent protein folding chaperone"/>
    <property type="evidence" value="ECO:0007669"/>
    <property type="project" value="InterPro"/>
</dbReference>
<dbReference type="GO" id="GO:0051082">
    <property type="term" value="F:unfolded protein binding"/>
    <property type="evidence" value="ECO:0007669"/>
    <property type="project" value="UniProtKB-UniRule"/>
</dbReference>
<dbReference type="CDD" id="cd16927">
    <property type="entry name" value="HATPase_Hsp90-like"/>
    <property type="match status" value="1"/>
</dbReference>
<dbReference type="FunFam" id="3.30.230.80:FF:000002">
    <property type="entry name" value="Molecular chaperone HtpG"/>
    <property type="match status" value="1"/>
</dbReference>
<dbReference type="FunFam" id="3.30.565.10:FF:000009">
    <property type="entry name" value="Molecular chaperone HtpG"/>
    <property type="match status" value="1"/>
</dbReference>
<dbReference type="Gene3D" id="3.30.230.80">
    <property type="match status" value="1"/>
</dbReference>
<dbReference type="Gene3D" id="3.40.50.11260">
    <property type="match status" value="1"/>
</dbReference>
<dbReference type="Gene3D" id="1.20.120.790">
    <property type="entry name" value="Heat shock protein 90, C-terminal domain"/>
    <property type="match status" value="1"/>
</dbReference>
<dbReference type="Gene3D" id="3.30.565.10">
    <property type="entry name" value="Histidine kinase-like ATPase, C-terminal domain"/>
    <property type="match status" value="1"/>
</dbReference>
<dbReference type="HAMAP" id="MF_00505">
    <property type="entry name" value="HSP90"/>
    <property type="match status" value="1"/>
</dbReference>
<dbReference type="InterPro" id="IPR036890">
    <property type="entry name" value="HATPase_C_sf"/>
</dbReference>
<dbReference type="InterPro" id="IPR019805">
    <property type="entry name" value="Heat_shock_protein_90_CS"/>
</dbReference>
<dbReference type="InterPro" id="IPR037196">
    <property type="entry name" value="HSP90_C"/>
</dbReference>
<dbReference type="InterPro" id="IPR001404">
    <property type="entry name" value="Hsp90_fam"/>
</dbReference>
<dbReference type="InterPro" id="IPR020575">
    <property type="entry name" value="Hsp90_N"/>
</dbReference>
<dbReference type="InterPro" id="IPR020568">
    <property type="entry name" value="Ribosomal_Su5_D2-typ_SF"/>
</dbReference>
<dbReference type="NCBIfam" id="NF003555">
    <property type="entry name" value="PRK05218.1"/>
    <property type="match status" value="1"/>
</dbReference>
<dbReference type="PANTHER" id="PTHR11528">
    <property type="entry name" value="HEAT SHOCK PROTEIN 90 FAMILY MEMBER"/>
    <property type="match status" value="1"/>
</dbReference>
<dbReference type="Pfam" id="PF13589">
    <property type="entry name" value="HATPase_c_3"/>
    <property type="match status" value="1"/>
</dbReference>
<dbReference type="Pfam" id="PF00183">
    <property type="entry name" value="HSP90"/>
    <property type="match status" value="1"/>
</dbReference>
<dbReference type="PIRSF" id="PIRSF002583">
    <property type="entry name" value="Hsp90"/>
    <property type="match status" value="1"/>
</dbReference>
<dbReference type="PRINTS" id="PR00775">
    <property type="entry name" value="HEATSHOCK90"/>
</dbReference>
<dbReference type="SMART" id="SM00387">
    <property type="entry name" value="HATPase_c"/>
    <property type="match status" value="1"/>
</dbReference>
<dbReference type="SUPFAM" id="SSF55874">
    <property type="entry name" value="ATPase domain of HSP90 chaperone/DNA topoisomerase II/histidine kinase"/>
    <property type="match status" value="1"/>
</dbReference>
<dbReference type="SUPFAM" id="SSF110942">
    <property type="entry name" value="HSP90 C-terminal domain"/>
    <property type="match status" value="1"/>
</dbReference>
<dbReference type="SUPFAM" id="SSF54211">
    <property type="entry name" value="Ribosomal protein S5 domain 2-like"/>
    <property type="match status" value="1"/>
</dbReference>
<dbReference type="PROSITE" id="PS00298">
    <property type="entry name" value="HSP90"/>
    <property type="match status" value="1"/>
</dbReference>
<gene>
    <name evidence="1" type="primary">htpG</name>
    <name type="ordered locus">Shew185_2586</name>
</gene>
<keyword id="KW-0067">ATP-binding</keyword>
<keyword id="KW-0143">Chaperone</keyword>
<keyword id="KW-0963">Cytoplasm</keyword>
<keyword id="KW-0547">Nucleotide-binding</keyword>
<keyword id="KW-0346">Stress response</keyword>
<sequence length="637" mass="71663">MSQQETHGFQTEVKQLLHLMIHSLYSNKEIFLRELVSNAADAADKLRYLALTNDALYEGDGELRVRISADKEKGTVTIEDNGVGMTRDGVIEHLGTIAKSGTADFFKNLSGESSKDSQLIGQFGVGFYSAFIVAKKVTVRTRAAGHKADEAVLWESEGEGNFTVDTITKASRGTEITLHLRDEEKEFADDWRLRSIITKYSDHISVPVEMWQEGTPESDGADGEKIPATEGQWKVMNKATALWMRSKADISDEEYQEFYKHISHDYTDALLWSHNRVEGKQEYTNLLYIPAKAPWDMWNRDRKHGLKLFVQRVFIMDDAEQFMPSYLRFVQGLIDSNDLPLNVSREILQDNHVTKAMRTGITKRVLGMLEKLAKDDAEKYQQFWAEFGQVLKEGPAEDFANRERIAGLLRFASTHTGSAAPTVSLDDYISRMKEGQTKIYYIVADSHEAAANSPHLELLRKKGIEVLLMSERIDEWLINHLTEYKEKQLHSVTRGDLELGELEDASEKEAQEKLEQESVALVERIKAALGSTVADVKVTSRLTDTPACVVAGEGEMSTQMIKLMQAAGQPVPEVKPTFEINPAHPLVSRLNDLQDEAAFADWSNLLLQQAQLSEKGSLADPSAFIKLMNQMLLANMK</sequence>
<name>HTPG_SHEB8</name>
<protein>
    <recommendedName>
        <fullName evidence="1">Chaperone protein HtpG</fullName>
    </recommendedName>
    <alternativeName>
        <fullName evidence="1">Heat shock protein HtpG</fullName>
    </alternativeName>
    <alternativeName>
        <fullName evidence="1">High temperature protein G</fullName>
    </alternativeName>
</protein>